<proteinExistence type="inferred from homology"/>
<gene>
    <name type="ordered locus">MM_1007</name>
</gene>
<reference key="1">
    <citation type="journal article" date="2002" name="J. Mol. Microbiol. Biotechnol.">
        <title>The genome of Methanosarcina mazei: evidence for lateral gene transfer between Bacteria and Archaea.</title>
        <authorList>
            <person name="Deppenmeier U."/>
            <person name="Johann A."/>
            <person name="Hartsch T."/>
            <person name="Merkl R."/>
            <person name="Schmitz R.A."/>
            <person name="Martinez-Arias R."/>
            <person name="Henne A."/>
            <person name="Wiezer A."/>
            <person name="Baeumer S."/>
            <person name="Jacobi C."/>
            <person name="Brueggemann H."/>
            <person name="Lienard T."/>
            <person name="Christmann A."/>
            <person name="Boemecke M."/>
            <person name="Steckel S."/>
            <person name="Bhattacharyya A."/>
            <person name="Lykidis A."/>
            <person name="Overbeek R."/>
            <person name="Klenk H.-P."/>
            <person name="Gunsalus R.P."/>
            <person name="Fritz H.-J."/>
            <person name="Gottschalk G."/>
        </authorList>
    </citation>
    <scope>NUCLEOTIDE SEQUENCE [LARGE SCALE GENOMIC DNA]</scope>
    <source>
        <strain>ATCC BAA-159 / DSM 3647 / Goe1 / Go1 / JCM 11833 / OCM 88</strain>
    </source>
</reference>
<name>Y1007_METMA</name>
<organism>
    <name type="scientific">Methanosarcina mazei (strain ATCC BAA-159 / DSM 3647 / Goe1 / Go1 / JCM 11833 / OCM 88)</name>
    <name type="common">Methanosarcina frisia</name>
    <dbReference type="NCBI Taxonomy" id="192952"/>
    <lineage>
        <taxon>Archaea</taxon>
        <taxon>Methanobacteriati</taxon>
        <taxon>Methanobacteriota</taxon>
        <taxon>Stenosarchaea group</taxon>
        <taxon>Methanomicrobia</taxon>
        <taxon>Methanosarcinales</taxon>
        <taxon>Methanosarcinaceae</taxon>
        <taxon>Methanosarcina</taxon>
    </lineage>
</organism>
<accession>Q8PY57</accession>
<feature type="chain" id="PRO_0000149235" description="UPF0215 protein MM_1007">
    <location>
        <begin position="1"/>
        <end position="196"/>
    </location>
</feature>
<protein>
    <recommendedName>
        <fullName evidence="1">UPF0215 protein MM_1007</fullName>
    </recommendedName>
</protein>
<comment type="similarity">
    <text evidence="1">Belongs to the UPF0215 family.</text>
</comment>
<evidence type="ECO:0000255" key="1">
    <source>
        <dbReference type="HAMAP-Rule" id="MF_00582"/>
    </source>
</evidence>
<sequence>MDSDFHVKPEIRILGIDDSALLNEKVMIVGTVFRGGDWIDGVLRSEITRDGLDATEVMVTMIKNSRHHNQLRVIMLDGITYGGFNVVDIEELYRETGLPVIVIMRSCPDFEKIRSALKHFSDGEERWKIIKKAGKIEKLITGRNGTPIYIQKAGIGAKNVEKIIRLTSIRSSIPEPLRVAHLIATGITLGESRGKA</sequence>
<dbReference type="EMBL" id="AE008384">
    <property type="protein sequence ID" value="AAM30703.1"/>
    <property type="molecule type" value="Genomic_DNA"/>
</dbReference>
<dbReference type="RefSeq" id="WP_011032956.1">
    <property type="nucleotide sequence ID" value="NC_003901.1"/>
</dbReference>
<dbReference type="SMR" id="Q8PY57"/>
<dbReference type="KEGG" id="mma:MM_1007"/>
<dbReference type="PATRIC" id="fig|192952.21.peg.1180"/>
<dbReference type="eggNOG" id="arCOG00928">
    <property type="taxonomic scope" value="Archaea"/>
</dbReference>
<dbReference type="HOGENOM" id="CLU_095956_1_0_2"/>
<dbReference type="Proteomes" id="UP000000595">
    <property type="component" value="Chromosome"/>
</dbReference>
<dbReference type="Gene3D" id="3.30.2170.10">
    <property type="entry name" value="archaeoglobus fulgidus dsm 4304 superfamily"/>
    <property type="match status" value="1"/>
</dbReference>
<dbReference type="HAMAP" id="MF_00582">
    <property type="entry name" value="UPF0215"/>
    <property type="match status" value="1"/>
</dbReference>
<dbReference type="InterPro" id="IPR002802">
    <property type="entry name" value="Endo_dU"/>
</dbReference>
<dbReference type="NCBIfam" id="NF001977">
    <property type="entry name" value="PRK00766.1"/>
    <property type="match status" value="1"/>
</dbReference>
<dbReference type="PANTHER" id="PTHR39518">
    <property type="entry name" value="UPF0215 PROTEIN MJ1150"/>
    <property type="match status" value="1"/>
</dbReference>
<dbReference type="PANTHER" id="PTHR39518:SF2">
    <property type="entry name" value="UPF0215 PROTEIN MJ1150"/>
    <property type="match status" value="1"/>
</dbReference>
<dbReference type="Pfam" id="PF01949">
    <property type="entry name" value="DUF99"/>
    <property type="match status" value="1"/>
</dbReference>
<dbReference type="PIRSF" id="PIRSF006380">
    <property type="entry name" value="UCP006380"/>
    <property type="match status" value="1"/>
</dbReference>